<keyword id="KW-1185">Reference proteome</keyword>
<keyword id="KW-0677">Repeat</keyword>
<keyword id="KW-0853">WD repeat</keyword>
<reference key="1">
    <citation type="journal article" date="2005" name="Nature">
        <title>The genome of the social amoeba Dictyostelium discoideum.</title>
        <authorList>
            <person name="Eichinger L."/>
            <person name="Pachebat J.A."/>
            <person name="Gloeckner G."/>
            <person name="Rajandream M.A."/>
            <person name="Sucgang R."/>
            <person name="Berriman M."/>
            <person name="Song J."/>
            <person name="Olsen R."/>
            <person name="Szafranski K."/>
            <person name="Xu Q."/>
            <person name="Tunggal B."/>
            <person name="Kummerfeld S."/>
            <person name="Madera M."/>
            <person name="Konfortov B.A."/>
            <person name="Rivero F."/>
            <person name="Bankier A.T."/>
            <person name="Lehmann R."/>
            <person name="Hamlin N."/>
            <person name="Davies R."/>
            <person name="Gaudet P."/>
            <person name="Fey P."/>
            <person name="Pilcher K."/>
            <person name="Chen G."/>
            <person name="Saunders D."/>
            <person name="Sodergren E.J."/>
            <person name="Davis P."/>
            <person name="Kerhornou A."/>
            <person name="Nie X."/>
            <person name="Hall N."/>
            <person name="Anjard C."/>
            <person name="Hemphill L."/>
            <person name="Bason N."/>
            <person name="Farbrother P."/>
            <person name="Desany B."/>
            <person name="Just E."/>
            <person name="Morio T."/>
            <person name="Rost R."/>
            <person name="Churcher C.M."/>
            <person name="Cooper J."/>
            <person name="Haydock S."/>
            <person name="van Driessche N."/>
            <person name="Cronin A."/>
            <person name="Goodhead I."/>
            <person name="Muzny D.M."/>
            <person name="Mourier T."/>
            <person name="Pain A."/>
            <person name="Lu M."/>
            <person name="Harper D."/>
            <person name="Lindsay R."/>
            <person name="Hauser H."/>
            <person name="James K.D."/>
            <person name="Quiles M."/>
            <person name="Madan Babu M."/>
            <person name="Saito T."/>
            <person name="Buchrieser C."/>
            <person name="Wardroper A."/>
            <person name="Felder M."/>
            <person name="Thangavelu M."/>
            <person name="Johnson D."/>
            <person name="Knights A."/>
            <person name="Loulseged H."/>
            <person name="Mungall K.L."/>
            <person name="Oliver K."/>
            <person name="Price C."/>
            <person name="Quail M.A."/>
            <person name="Urushihara H."/>
            <person name="Hernandez J."/>
            <person name="Rabbinowitsch E."/>
            <person name="Steffen D."/>
            <person name="Sanders M."/>
            <person name="Ma J."/>
            <person name="Kohara Y."/>
            <person name="Sharp S."/>
            <person name="Simmonds M.N."/>
            <person name="Spiegler S."/>
            <person name="Tivey A."/>
            <person name="Sugano S."/>
            <person name="White B."/>
            <person name="Walker D."/>
            <person name="Woodward J.R."/>
            <person name="Winckler T."/>
            <person name="Tanaka Y."/>
            <person name="Shaulsky G."/>
            <person name="Schleicher M."/>
            <person name="Weinstock G.M."/>
            <person name="Rosenthal A."/>
            <person name="Cox E.C."/>
            <person name="Chisholm R.L."/>
            <person name="Gibbs R.A."/>
            <person name="Loomis W.F."/>
            <person name="Platzer M."/>
            <person name="Kay R.R."/>
            <person name="Williams J.G."/>
            <person name="Dear P.H."/>
            <person name="Noegel A.A."/>
            <person name="Barrell B.G."/>
            <person name="Kuspa A."/>
        </authorList>
    </citation>
    <scope>NUCLEOTIDE SEQUENCE [LARGE SCALE GENOMIC DNA]</scope>
    <source>
        <strain>AX4</strain>
    </source>
</reference>
<dbReference type="EMBL" id="AAFI02000164">
    <property type="protein sequence ID" value="EAL62138.1"/>
    <property type="molecule type" value="Genomic_DNA"/>
</dbReference>
<dbReference type="RefSeq" id="XP_635648.1">
    <property type="nucleotide sequence ID" value="XM_630556.1"/>
</dbReference>
<dbReference type="SMR" id="Q54FW9"/>
<dbReference type="FunCoup" id="Q54FW9">
    <property type="interactions" value="1"/>
</dbReference>
<dbReference type="STRING" id="44689.Q54FW9"/>
<dbReference type="PaxDb" id="44689-DDB0304570"/>
<dbReference type="EnsemblProtists" id="EAL62138">
    <property type="protein sequence ID" value="EAL62138"/>
    <property type="gene ID" value="DDB_G0290555"/>
</dbReference>
<dbReference type="GeneID" id="8627720"/>
<dbReference type="KEGG" id="ddi:DDB_G0290555"/>
<dbReference type="dictyBase" id="DDB_G0290555"/>
<dbReference type="VEuPathDB" id="AmoebaDB:DDB_G0290555"/>
<dbReference type="eggNOG" id="KOG3881">
    <property type="taxonomic scope" value="Eukaryota"/>
</dbReference>
<dbReference type="HOGENOM" id="CLU_536864_0_0_1"/>
<dbReference type="InParanoid" id="Q54FW9"/>
<dbReference type="OMA" id="TDNMDSD"/>
<dbReference type="PhylomeDB" id="Q54FW9"/>
<dbReference type="PRO" id="PR:Q54FW9"/>
<dbReference type="Proteomes" id="UP000002195">
    <property type="component" value="Chromosome 5"/>
</dbReference>
<dbReference type="GO" id="GO:0005730">
    <property type="term" value="C:nucleolus"/>
    <property type="evidence" value="ECO:0000318"/>
    <property type="project" value="GO_Central"/>
</dbReference>
<dbReference type="GO" id="GO:0030687">
    <property type="term" value="C:preribosome, large subunit precursor"/>
    <property type="evidence" value="ECO:0000318"/>
    <property type="project" value="GO_Central"/>
</dbReference>
<dbReference type="GO" id="GO:0042273">
    <property type="term" value="P:ribosomal large subunit biogenesis"/>
    <property type="evidence" value="ECO:0000318"/>
    <property type="project" value="GO_Central"/>
</dbReference>
<dbReference type="FunFam" id="2.130.10.10:FF:003620">
    <property type="entry name" value="WD repeat-containing protein DDB_G0290555"/>
    <property type="match status" value="1"/>
</dbReference>
<dbReference type="Gene3D" id="2.130.10.10">
    <property type="entry name" value="YVTN repeat-like/Quinoprotein amine dehydrogenase"/>
    <property type="match status" value="1"/>
</dbReference>
<dbReference type="InterPro" id="IPR015943">
    <property type="entry name" value="WD40/YVTN_repeat-like_dom_sf"/>
</dbReference>
<dbReference type="InterPro" id="IPR036322">
    <property type="entry name" value="WD40_repeat_dom_sf"/>
</dbReference>
<dbReference type="InterPro" id="IPR001680">
    <property type="entry name" value="WD40_rpt"/>
</dbReference>
<dbReference type="InterPro" id="IPR037379">
    <property type="entry name" value="WDR74/Nsa1"/>
</dbReference>
<dbReference type="PANTHER" id="PTHR16038">
    <property type="entry name" value="NOP SEVEN ASSOCIATED PROTEIN 1"/>
    <property type="match status" value="1"/>
</dbReference>
<dbReference type="PANTHER" id="PTHR16038:SF4">
    <property type="entry name" value="WD REPEAT-CONTAINING PROTEIN 74"/>
    <property type="match status" value="1"/>
</dbReference>
<dbReference type="SMART" id="SM00320">
    <property type="entry name" value="WD40"/>
    <property type="match status" value="2"/>
</dbReference>
<dbReference type="SUPFAM" id="SSF50978">
    <property type="entry name" value="WD40 repeat-like"/>
    <property type="match status" value="1"/>
</dbReference>
<dbReference type="PROSITE" id="PS50294">
    <property type="entry name" value="WD_REPEATS_REGION"/>
    <property type="match status" value="1"/>
</dbReference>
<gene>
    <name type="ORF">DDB_G0290555</name>
</gene>
<feature type="chain" id="PRO_0000384447" description="WD repeat-containing protein DDB_G0290555">
    <location>
        <begin position="1"/>
        <end position="508"/>
    </location>
</feature>
<feature type="repeat" description="WD 1">
    <location>
        <begin position="32"/>
        <end position="74"/>
    </location>
</feature>
<feature type="repeat" description="WD 2">
    <location>
        <begin position="159"/>
        <end position="198"/>
    </location>
</feature>
<feature type="repeat" description="WD 3">
    <location>
        <begin position="252"/>
        <end position="292"/>
    </location>
</feature>
<feature type="repeat" description="WD 4">
    <location>
        <begin position="295"/>
        <end position="334"/>
    </location>
</feature>
<feature type="region of interest" description="Disordered" evidence="1">
    <location>
        <begin position="368"/>
        <end position="508"/>
    </location>
</feature>
<feature type="compositionally biased region" description="Acidic residues" evidence="1">
    <location>
        <begin position="399"/>
        <end position="435"/>
    </location>
</feature>
<feature type="compositionally biased region" description="Basic and acidic residues" evidence="1">
    <location>
        <begin position="436"/>
        <end position="446"/>
    </location>
</feature>
<feature type="compositionally biased region" description="Acidic residues" evidence="1">
    <location>
        <begin position="447"/>
        <end position="456"/>
    </location>
</feature>
<feature type="compositionally biased region" description="Low complexity" evidence="1">
    <location>
        <begin position="471"/>
        <end position="493"/>
    </location>
</feature>
<feature type="compositionally biased region" description="Basic residues" evidence="1">
    <location>
        <begin position="497"/>
        <end position="508"/>
    </location>
</feature>
<organism>
    <name type="scientific">Dictyostelium discoideum</name>
    <name type="common">Social amoeba</name>
    <dbReference type="NCBI Taxonomy" id="44689"/>
    <lineage>
        <taxon>Eukaryota</taxon>
        <taxon>Amoebozoa</taxon>
        <taxon>Evosea</taxon>
        <taxon>Eumycetozoa</taxon>
        <taxon>Dictyostelia</taxon>
        <taxon>Dictyosteliales</taxon>
        <taxon>Dictyosteliaceae</taxon>
        <taxon>Dictyostelium</taxon>
    </lineage>
</organism>
<sequence>MDVLVGCSTGINKIYNIHKKTPTGLYGALNTTSELNVMTFGWNSVENNEDYVFYGYSNGILKYWNQKEKQLIGEIDYGQSIKAIHPLNNDKLLVALENGLVDVKTLTAPITTQLAPMNLPTLNKKKSPAAAAAASTVGKNNKSKQVIVEPVNTQSFSLNVATNLSGFAMNPSNDKFAFGGKDVNLTIWDLEKQVKTYSAKFKHDFLNLQEPVSINVVKYMNDDKILIGSDFRIKAYDLRSKTNRSSFLDVSFSKHPIQSIQYTNQKEHYFYASDSIGKVFCYDVRTSRQVGSFKDSAGSVKDIAIHPTLPLLATVGLDRHLRVYNLDNRKMLHKIFLKQRLSCVLFSKEEPTNEIAQEEEEIWKNLEENKNRINNDDNDDNNEGNDKKKSISIKVTDNMDSDDDIEDGDDNDVEFPMEADSDDSDFDLGNSDDDNISVKKENKGDSDDSDDDSDEDEKPKRKTPAKSNLRNNNNNNNKGKNNKGKNNSSTKKTSQVLKKKFAGLKKRK</sequence>
<protein>
    <recommendedName>
        <fullName>WD repeat-containing protein DDB_G0290555</fullName>
    </recommendedName>
</protein>
<proteinExistence type="predicted"/>
<evidence type="ECO:0000256" key="1">
    <source>
        <dbReference type="SAM" id="MobiDB-lite"/>
    </source>
</evidence>
<accession>Q54FW9</accession>
<name>Y0555_DICDI</name>